<proteinExistence type="inferred from homology"/>
<accession>P0DQM1</accession>
<reference key="1">
    <citation type="journal article" date="2016" name="Cell Chem. Biol.">
        <title>Structural characterization and bioactivity analysis of the two-component lantibiotic Flv system from a ruminant bacterium.</title>
        <authorList>
            <person name="Zhao X."/>
            <person name="van der Donk W.A."/>
        </authorList>
    </citation>
    <scope>NUCLEOTIDE SEQUENCE [GENOMIC DNA]</scope>
    <scope>EXPRESSION IN E.COLI</scope>
    <scope>DEHYDRATION AT THR-43 AND THR-47</scope>
    <scope>LANTHIONINE AND METHYLLANTHIONINE CROSS-LINKS</scope>
    <source>
        <strain>FD-1</strain>
    </source>
</reference>
<gene>
    <name evidence="4" type="primary">FlvA1.a</name>
</gene>
<evidence type="ECO:0000250" key="1">
    <source>
        <dbReference type="UniProtKB" id="H2A7G5"/>
    </source>
</evidence>
<evidence type="ECO:0000250" key="2">
    <source>
        <dbReference type="UniProtKB" id="P86475"/>
    </source>
</evidence>
<evidence type="ECO:0000269" key="3">
    <source>
    </source>
</evidence>
<evidence type="ECO:0000303" key="4">
    <source>
    </source>
</evidence>
<evidence type="ECO:0000305" key="5"/>
<evidence type="ECO:0000305" key="6">
    <source>
    </source>
</evidence>
<keyword id="KW-0044">Antibiotic</keyword>
<keyword id="KW-0929">Antimicrobial</keyword>
<keyword id="KW-0078">Bacteriocin</keyword>
<keyword id="KW-0425">Lantibiotic</keyword>
<keyword id="KW-0446">Lipid-binding</keyword>
<keyword id="KW-0964">Secreted</keyword>
<keyword id="KW-0883">Thioether bond</keyword>
<protein>
    <recommendedName>
        <fullName evidence="4">Lantibiotic Flvalpha.a</fullName>
    </recommendedName>
</protein>
<name>LAN1A_RUMFL</name>
<feature type="propeptide" id="PRO_0000450388" description="Cleaved by FlvT" evidence="6">
    <location>
        <begin position="1"/>
        <end position="38"/>
    </location>
</feature>
<feature type="peptide" id="PRO_0000450389" description="Lantibiotic Flvalpha.a" evidence="6">
    <location>
        <begin position="39"/>
        <end position="80"/>
    </location>
</feature>
<feature type="modified residue" description="2,3-didehydrobutyrine; by FlvM1" evidence="6">
    <location>
        <position position="43"/>
    </location>
</feature>
<feature type="modified residue" description="2,3-didehydrobutyrine; by FlvM1" evidence="6">
    <location>
        <position position="47"/>
    </location>
</feature>
<feature type="cross-link" description="Beta-methyllanthionine (Thr-Cys); by FlvM1" evidence="6">
    <location>
        <begin position="52"/>
        <end position="55"/>
    </location>
</feature>
<feature type="cross-link" description="Lanthionine (Ser-Cys); by FlvM1" evidence="6">
    <location>
        <begin position="58"/>
        <end position="68"/>
    </location>
</feature>
<feature type="cross-link" description="Beta-methyllanthionine (Thr-Cys); by FlvM1" evidence="6">
    <location>
        <begin position="69"/>
        <end position="74"/>
    </location>
</feature>
<feature type="cross-link" description="Beta-methyllanthionine (Thr-Cys); by FlvM1" evidence="6">
    <location>
        <begin position="71"/>
        <end position="78"/>
    </location>
</feature>
<comment type="function">
    <text evidence="2 3">Lanthionine-containing peptide antibiotic (lantibiotic) only active on Gram-positive bacteria in synergy with Flvbeta peptides, which are encoded by the same operon than Flvalpha.a (PubMed:27028884). Shows antibacterial activity in synergy with Flvbeta.b, Flvbeta.c, Flvbeta.e and Flvbeta.g (PubMed:27028884). Does not show antibacterial activity when tested with Flvbeta.a, Flvbeta.d, Flvbeta.f and Flvbeta.h (PubMed:27028884). The bactericidal activity of lantibiotics is based on depolarization of energized bacterial cytoplasmic membranes, initiated by the formation of aqueous transmembrane pores (By similarity).</text>
</comment>
<comment type="subcellular location">
    <subcellularLocation>
        <location evidence="5">Secreted</location>
    </subcellularLocation>
</comment>
<comment type="PTM">
    <text evidence="6">The lanthionine formed by Ser-58 and Cys-68 forms a putative lipid II binding motif.</text>
</comment>
<comment type="PTM">
    <text evidence="1 3">Maturation of FlvA1 peptides involves the enzymatic conversion of Thr, and Ser into dehydrated AA and the formation of thioether bonds with cysteines (PubMed:27028884). Modifications are processed by the flavecin synthetase FlvM1 (PubMed:27028884). This is followed by membrane translocation and cleavage of the modified precursor (By similarity).</text>
</comment>
<comment type="PTM">
    <text evidence="3">Contains DL-lanthionine and DL-beta-methyllanthionine, when coepressed in E.coli with the flavecin synthetase FlvM1.</text>
</comment>
<organism>
    <name type="scientific">Ruminococcus flavefaciens</name>
    <dbReference type="NCBI Taxonomy" id="1265"/>
    <lineage>
        <taxon>Bacteria</taxon>
        <taxon>Bacillati</taxon>
        <taxon>Bacillota</taxon>
        <taxon>Clostridia</taxon>
        <taxon>Eubacteriales</taxon>
        <taxon>Oscillospiraceae</taxon>
        <taxon>Ruminococcus</taxon>
    </lineage>
</organism>
<dbReference type="GO" id="GO:0005576">
    <property type="term" value="C:extracellular region"/>
    <property type="evidence" value="ECO:0007669"/>
    <property type="project" value="UniProtKB-SubCell"/>
</dbReference>
<dbReference type="GO" id="GO:0008289">
    <property type="term" value="F:lipid binding"/>
    <property type="evidence" value="ECO:0007669"/>
    <property type="project" value="UniProtKB-KW"/>
</dbReference>
<dbReference type="GO" id="GO:0005102">
    <property type="term" value="F:signaling receptor binding"/>
    <property type="evidence" value="ECO:0007669"/>
    <property type="project" value="UniProtKB-KW"/>
</dbReference>
<dbReference type="GO" id="GO:0042742">
    <property type="term" value="P:defense response to bacterium"/>
    <property type="evidence" value="ECO:0007669"/>
    <property type="project" value="UniProtKB-KW"/>
</dbReference>
<dbReference type="GO" id="GO:0031640">
    <property type="term" value="P:killing of cells of another organism"/>
    <property type="evidence" value="ECO:0007669"/>
    <property type="project" value="UniProtKB-KW"/>
</dbReference>
<dbReference type="NCBIfam" id="NF000539">
    <property type="entry name" value="plantaricin"/>
    <property type="match status" value="1"/>
</dbReference>
<sequence length="80" mass="8458">MNKNPIYRSEEEAKDIACGNVAAELDENSQALDAINGAGWKQTIVCTIAQGTVGCLVSYGLGNGGYCCTYTVECSKTCNK</sequence>